<keyword id="KW-0012">Acyltransferase</keyword>
<keyword id="KW-0808">Transferase</keyword>
<accession>A1KQF4</accession>
<proteinExistence type="inferred from homology"/>
<feature type="chain" id="PRO_0000314661" description="Trehalose-2-sulfate acyltransferase PapA2">
    <location>
        <begin position="1"/>
        <end position="468"/>
    </location>
</feature>
<organism>
    <name type="scientific">Mycobacterium bovis (strain BCG / Pasteur 1173P2)</name>
    <dbReference type="NCBI Taxonomy" id="410289"/>
    <lineage>
        <taxon>Bacteria</taxon>
        <taxon>Bacillati</taxon>
        <taxon>Actinomycetota</taxon>
        <taxon>Actinomycetes</taxon>
        <taxon>Mycobacteriales</taxon>
        <taxon>Mycobacteriaceae</taxon>
        <taxon>Mycobacterium</taxon>
        <taxon>Mycobacterium tuberculosis complex</taxon>
    </lineage>
</organism>
<gene>
    <name type="primary">papA2</name>
    <name type="ordered locus">BCG_3882c</name>
</gene>
<reference key="1">
    <citation type="journal article" date="2007" name="Proc. Natl. Acad. Sci. U.S.A.">
        <title>Genome plasticity of BCG and impact on vaccine efficacy.</title>
        <authorList>
            <person name="Brosch R."/>
            <person name="Gordon S.V."/>
            <person name="Garnier T."/>
            <person name="Eiglmeier K."/>
            <person name="Frigui W."/>
            <person name="Valenti P."/>
            <person name="Dos Santos S."/>
            <person name="Duthoy S."/>
            <person name="Lacroix C."/>
            <person name="Garcia-Pelayo C."/>
            <person name="Inwald J.K."/>
            <person name="Golby P."/>
            <person name="Garcia J.N."/>
            <person name="Hewinson R.G."/>
            <person name="Behr M.A."/>
            <person name="Quail M.A."/>
            <person name="Churcher C."/>
            <person name="Barrell B.G."/>
            <person name="Parkhill J."/>
            <person name="Cole S.T."/>
        </authorList>
    </citation>
    <scope>NUCLEOTIDE SEQUENCE [LARGE SCALE GENOMIC DNA]</scope>
    <source>
        <strain>BCG / Pasteur 1173P2</strain>
    </source>
</reference>
<name>PAPA2_MYCBP</name>
<protein>
    <recommendedName>
        <fullName evidence="1">Trehalose-2-sulfate acyltransferase PapA2</fullName>
        <ecNumber evidence="1">2.3.1.288</ecNumber>
    </recommendedName>
    <alternativeName>
        <fullName evidence="1">2-O-sulfo trehalose long-chain-acyltransferase</fullName>
    </alternativeName>
    <alternativeName>
        <fullName>Polyketide synthase-associated protein A2</fullName>
    </alternativeName>
</protein>
<dbReference type="EC" id="2.3.1.288" evidence="1"/>
<dbReference type="EMBL" id="AM408590">
    <property type="protein sequence ID" value="CAL73872.1"/>
    <property type="molecule type" value="Genomic_DNA"/>
</dbReference>
<dbReference type="RefSeq" id="WP_010950943.1">
    <property type="nucleotide sequence ID" value="NC_008769.1"/>
</dbReference>
<dbReference type="SMR" id="A1KQF4"/>
<dbReference type="KEGG" id="mbb:BCG_3882c"/>
<dbReference type="HOGENOM" id="CLU_034647_0_0_11"/>
<dbReference type="Proteomes" id="UP000001472">
    <property type="component" value="Chromosome"/>
</dbReference>
<dbReference type="GO" id="GO:0016746">
    <property type="term" value="F:acyltransferase activity"/>
    <property type="evidence" value="ECO:0007669"/>
    <property type="project" value="UniProtKB-KW"/>
</dbReference>
<dbReference type="GO" id="GO:0008610">
    <property type="term" value="P:lipid biosynthetic process"/>
    <property type="evidence" value="ECO:0007669"/>
    <property type="project" value="UniProtKB-ARBA"/>
</dbReference>
<dbReference type="FunFam" id="3.30.559.10:FF:000022">
    <property type="entry name" value="Trehalose-2-sulfate acyltransferase papA2"/>
    <property type="match status" value="1"/>
</dbReference>
<dbReference type="FunFam" id="3.30.559.30:FF:000007">
    <property type="entry name" value="Trehalose-2-sulfate acyltransferase papA2"/>
    <property type="match status" value="1"/>
</dbReference>
<dbReference type="Gene3D" id="3.30.559.10">
    <property type="entry name" value="Chloramphenicol acetyltransferase-like domain"/>
    <property type="match status" value="1"/>
</dbReference>
<dbReference type="Gene3D" id="3.30.559.30">
    <property type="entry name" value="Nonribosomal peptide synthetase, condensation domain"/>
    <property type="match status" value="1"/>
</dbReference>
<dbReference type="InterPro" id="IPR023213">
    <property type="entry name" value="CAT-like_dom_sf"/>
</dbReference>
<dbReference type="InterPro" id="IPR001242">
    <property type="entry name" value="Condensatn"/>
</dbReference>
<dbReference type="Pfam" id="PF00668">
    <property type="entry name" value="Condensation"/>
    <property type="match status" value="1"/>
</dbReference>
<dbReference type="SUPFAM" id="SSF52777">
    <property type="entry name" value="CoA-dependent acyltransferases"/>
    <property type="match status" value="2"/>
</dbReference>
<comment type="function">
    <text evidence="1">Catalyzes the acylation of trehalose-2-sulfate by adding the palmitoyl group at the 2'-position to yield the intermediate trehalose-2-sulfate-2'-palmitate (SL659).</text>
</comment>
<comment type="catalytic activity">
    <reaction evidence="1">
        <text>2-O-sulfo-alpha,alpha-trehalose + hexadecanoyl-CoA = 2-O-sulfo-2'-O-hexadecanoyl-alpha,alpha-trehalose + CoA</text>
        <dbReference type="Rhea" id="RHEA:44060"/>
        <dbReference type="ChEBI" id="CHEBI:57287"/>
        <dbReference type="ChEBI" id="CHEBI:57379"/>
        <dbReference type="ChEBI" id="CHEBI:60091"/>
        <dbReference type="ChEBI" id="CHEBI:60092"/>
        <dbReference type="EC" id="2.3.1.288"/>
    </reaction>
    <physiologicalReaction direction="left-to-right" evidence="1">
        <dbReference type="Rhea" id="RHEA:44061"/>
    </physiologicalReaction>
</comment>
<comment type="miscellaneous">
    <text>In strain BCG, the sulfolipid-1 (SL-1) is not synthesized.</text>
</comment>
<comment type="similarity">
    <text evidence="2">Belongs to the PapA acyltransferase family.</text>
</comment>
<evidence type="ECO:0000250" key="1">
    <source>
        <dbReference type="UniProtKB" id="P9WIK7"/>
    </source>
</evidence>
<evidence type="ECO:0000305" key="2"/>
<sequence length="468" mass="52162">MFSITTLRDWTPDPGSIICWHASPTAKAKARQAPISEVPPSYQQAQHLRRYRDHVARGLDMSRLMIFTWDLPGRCNIRAMNYAINAHLRRHDTYHSWFEFDNAEHIVRHTIADPADIEVVQAEHQNMTSAELRHHIATPQPLQWDCFLFGIIQSDDHFTFYASIAHLCVDPMIVGVLFIEIHMMYSALVGGDPPIELPPAGRYDDHCVRQYADTAALTLDSARVRRWVEFAANNDGTLPHFPLPLGDLSVPHTGKLLTETLMDEQQGERFEAACVAAGARFSGGVFACAALAERELTNCETFDVVTTTDTRRTPTELRTTGWFTGLVPITVPVASGLFDSAARVAQISFDSGKDLATVPFDRVLELARPETGLRPPRPGNFVMSFLDASIAPLSTVANSDLNFRIYDEGRVSHQVSMWVNRYQHQTTVTVLFPDNPIASESVANYIAAMKSIYIRTADGTLAILKPGT</sequence>